<feature type="chain" id="PRO_0000176895" description="Hemolysin-3">
    <location>
        <begin position="1"/>
        <end position="219"/>
    </location>
</feature>
<feature type="transmembrane region" description="Helical" evidence="1">
    <location>
        <begin position="19"/>
        <end position="39"/>
    </location>
</feature>
<feature type="transmembrane region" description="Helical" evidence="1">
    <location>
        <begin position="49"/>
        <end position="69"/>
    </location>
</feature>
<feature type="transmembrane region" description="Helical" evidence="1">
    <location>
        <begin position="83"/>
        <end position="103"/>
    </location>
</feature>
<feature type="transmembrane region" description="Helical" evidence="1">
    <location>
        <begin position="112"/>
        <end position="132"/>
    </location>
</feature>
<feature type="transmembrane region" description="Helical" evidence="1">
    <location>
        <begin position="138"/>
        <end position="158"/>
    </location>
</feature>
<feature type="transmembrane region" description="Helical" evidence="1">
    <location>
        <begin position="165"/>
        <end position="185"/>
    </location>
</feature>
<feature type="transmembrane region" description="Helical" evidence="1">
    <location>
        <begin position="194"/>
        <end position="214"/>
    </location>
</feature>
<keyword id="KW-1003">Cell membrane</keyword>
<keyword id="KW-0204">Cytolysis</keyword>
<keyword id="KW-0354">Hemolysis</keyword>
<keyword id="KW-0472">Membrane</keyword>
<keyword id="KW-0800">Toxin</keyword>
<keyword id="KW-0812">Transmembrane</keyword>
<keyword id="KW-1133">Transmembrane helix</keyword>
<keyword id="KW-0843">Virulence</keyword>
<gene>
    <name evidence="7" type="primary">hly-III</name>
</gene>
<dbReference type="EMBL" id="X84058">
    <property type="protein sequence ID" value="CAA58877.1"/>
    <property type="molecule type" value="Genomic_DNA"/>
</dbReference>
<dbReference type="PIR" id="S59967">
    <property type="entry name" value="S59967"/>
</dbReference>
<dbReference type="SMR" id="P54176"/>
<dbReference type="TCDB" id="1.C.113.1.1">
    <property type="family name" value="the hemolysin iii (hly iii) family"/>
</dbReference>
<dbReference type="eggNOG" id="COG1272">
    <property type="taxonomic scope" value="Bacteria"/>
</dbReference>
<dbReference type="GO" id="GO:0005886">
    <property type="term" value="C:plasma membrane"/>
    <property type="evidence" value="ECO:0007669"/>
    <property type="project" value="UniProtKB-SubCell"/>
</dbReference>
<dbReference type="GO" id="GO:0140911">
    <property type="term" value="F:pore-forming activity"/>
    <property type="evidence" value="ECO:0007669"/>
    <property type="project" value="InterPro"/>
</dbReference>
<dbReference type="GO" id="GO:0090729">
    <property type="term" value="F:toxin activity"/>
    <property type="evidence" value="ECO:0007669"/>
    <property type="project" value="UniProtKB-KW"/>
</dbReference>
<dbReference type="GO" id="GO:0031640">
    <property type="term" value="P:killing of cells of another organism"/>
    <property type="evidence" value="ECO:0007669"/>
    <property type="project" value="UniProtKB-KW"/>
</dbReference>
<dbReference type="InterPro" id="IPR004254">
    <property type="entry name" value="AdipoR/HlyIII-related"/>
</dbReference>
<dbReference type="InterPro" id="IPR005744">
    <property type="entry name" value="Hy-lIII"/>
</dbReference>
<dbReference type="NCBIfam" id="TIGR01065">
    <property type="entry name" value="hlyIII"/>
    <property type="match status" value="1"/>
</dbReference>
<dbReference type="PANTHER" id="PTHR20855">
    <property type="entry name" value="ADIPOR/PROGESTIN RECEPTOR-RELATED"/>
    <property type="match status" value="1"/>
</dbReference>
<dbReference type="PANTHER" id="PTHR20855:SF129">
    <property type="entry name" value="HEMOLYSIN-3 HOMOLOG"/>
    <property type="match status" value="1"/>
</dbReference>
<dbReference type="Pfam" id="PF03006">
    <property type="entry name" value="HlyIII"/>
    <property type="match status" value="1"/>
</dbReference>
<accession>P54176</accession>
<comment type="function">
    <text evidence="2 3 4 5 9">Might be virulent against a mammalian host; when expressed in E.coli, the soluble extract has hemolytic activity on human erythrocytes. The activity is not inhibited by cholesterol or activated by 2-mercaptoethanol (PubMed:7495855, PubMed:8962879). Might be pore-forming protein (Probable) (PubMed:8962879). Its in vivo role in virulence is untested, nor has it been shown to be secreted by B.cereus (PubMed:23748204, PubMed:33525722).</text>
</comment>
<comment type="subcellular location">
    <subcellularLocation>
        <location evidence="8">Cell membrane</location>
        <topology evidence="1">Multi-pass membrane protein</topology>
    </subcellularLocation>
</comment>
<comment type="similarity">
    <text evidence="8">Belongs to the UPF0073 (Hly-III) family.</text>
</comment>
<reference key="1">
    <citation type="journal article" date="1995" name="Biochim. Biophys. Acta">
        <title>Cloning and primary structure of a new hemolysin gene from Bacillus cereus.</title>
        <authorList>
            <person name="Baida G.E."/>
            <person name="Kuzmin N.P."/>
        </authorList>
    </citation>
    <scope>NUCLEOTIDE SEQUENCE [GENOMIC DNA]</scope>
    <scope>FUNCTION</scope>
    <source>
        <strain>VKM B-164</strain>
    </source>
</reference>
<reference key="2">
    <citation type="journal article" date="1996" name="Biochim. Biophys. Acta">
        <title>Mechanism of action of hemolysin III from Bacillus cereus.</title>
        <authorList>
            <person name="Baida G.E."/>
            <person name="Kuzmin N.P."/>
        </authorList>
    </citation>
    <scope>FUNCTION</scope>
</reference>
<reference key="3">
    <citation type="journal article" date="2013" name="Toxins">
        <title>The pore-forming haemolysins of bacillus cereus: a review.</title>
        <authorList>
            <person name="Ramarao N."/>
            <person name="Sanchis V."/>
        </authorList>
    </citation>
    <scope>DISCUSSION OF FUNCTION</scope>
</reference>
<reference key="4">
    <citation type="journal article" date="2021" name="Toxins">
        <title>The Food Poisoning Toxins of Bacillus cereus.</title>
        <authorList>
            <person name="Dietrich R."/>
            <person name="Jessberger N."/>
            <person name="Ehling-Schulz M."/>
            <person name="Maertlbauer E."/>
            <person name="Granum P.E."/>
        </authorList>
    </citation>
    <scope>DISCUSSION OF FUNCTION</scope>
</reference>
<organism>
    <name type="scientific">Bacillus cereus</name>
    <dbReference type="NCBI Taxonomy" id="1396"/>
    <lineage>
        <taxon>Bacteria</taxon>
        <taxon>Bacillati</taxon>
        <taxon>Bacillota</taxon>
        <taxon>Bacilli</taxon>
        <taxon>Bacillales</taxon>
        <taxon>Bacillaceae</taxon>
        <taxon>Bacillus</taxon>
        <taxon>Bacillus cereus group</taxon>
    </lineage>
</organism>
<sequence>MTEKMTRMTQFVKEEIANAITHGIGAILSIPALIILIIHASKHGTASAVVAFTVYGVSMFLLYLFSTLLHSIHHPKVEKLFTILDHSAIYLLIAGTYTPFLLITLRGPLGWTLLAIIWTLAIGGIIFKIFFVRRFIKASTLCYIIMGWLIIVAIKPLYENLTGHGFSLLLAGGILYSVGAIFFLWEKLPFNHAIWHLFVLGGSAMMFFCVLFYVLPTAS</sequence>
<evidence type="ECO:0000255" key="1"/>
<evidence type="ECO:0000269" key="2">
    <source>
    </source>
</evidence>
<evidence type="ECO:0000269" key="3">
    <source>
    </source>
</evidence>
<evidence type="ECO:0000303" key="4">
    <source>
    </source>
</evidence>
<evidence type="ECO:0000303" key="5">
    <source>
    </source>
</evidence>
<evidence type="ECO:0000303" key="6">
    <source>
    </source>
</evidence>
<evidence type="ECO:0000303" key="7">
    <source>
    </source>
</evidence>
<evidence type="ECO:0000305" key="8"/>
<evidence type="ECO:0000305" key="9">
    <source>
    </source>
</evidence>
<proteinExistence type="inferred from homology"/>
<protein>
    <recommendedName>
        <fullName>Hemolysin-3</fullName>
    </recommendedName>
    <alternativeName>
        <fullName evidence="6">Hemolysin III</fullName>
        <shortName evidence="6">Hly-III</shortName>
    </alternativeName>
</protein>
<name>HLY3_BACCE</name>